<dbReference type="EMBL" id="U92569">
    <property type="protein sequence ID" value="AAC48806.1"/>
    <property type="molecule type" value="mRNA"/>
</dbReference>
<dbReference type="RefSeq" id="NP_776319.1">
    <molecule id="O02703-1"/>
    <property type="nucleotide sequence ID" value="NM_173894.1"/>
</dbReference>
<dbReference type="BMRB" id="O02703"/>
<dbReference type="SMR" id="O02703"/>
<dbReference type="FunCoup" id="O02703">
    <property type="interactions" value="1663"/>
</dbReference>
<dbReference type="STRING" id="9913.ENSBTAP00000073472"/>
<dbReference type="PaxDb" id="9913-ENSBTAP00000017739"/>
<dbReference type="PeptideAtlas" id="O02703"/>
<dbReference type="Ensembl" id="ENSBTAT00000066540.2">
    <molecule id="O02703-1"/>
    <property type="protein sequence ID" value="ENSBTAP00000073472.2"/>
    <property type="gene ID" value="ENSBTAG00000013340.7"/>
</dbReference>
<dbReference type="GeneID" id="280730"/>
<dbReference type="KEGG" id="bta:280730"/>
<dbReference type="CTD" id="581"/>
<dbReference type="VEuPathDB" id="HostDB:ENSBTAG00000013340"/>
<dbReference type="eggNOG" id="KOG4728">
    <property type="taxonomic scope" value="Eukaryota"/>
</dbReference>
<dbReference type="GeneTree" id="ENSGT01130000278292"/>
<dbReference type="HOGENOM" id="CLU_085401_2_2_1"/>
<dbReference type="InParanoid" id="O02703"/>
<dbReference type="OMA" id="QCCGDSE"/>
<dbReference type="OrthoDB" id="6080198at2759"/>
<dbReference type="TreeFam" id="TF315834"/>
<dbReference type="Reactome" id="R-BTA-111457">
    <property type="pathway name" value="Release of apoptotic factors from the mitochondria"/>
</dbReference>
<dbReference type="Reactome" id="R-BTA-114294">
    <property type="pathway name" value="Activation, translocation and oligomerization of BAX"/>
</dbReference>
<dbReference type="Reactome" id="R-BTA-5620971">
    <property type="pathway name" value="Pyroptosis"/>
</dbReference>
<dbReference type="Reactome" id="R-BTA-6804114">
    <property type="pathway name" value="TP53 Regulates Transcription of Genes Involved in G2 Cell Cycle Arrest"/>
</dbReference>
<dbReference type="Proteomes" id="UP000009136">
    <property type="component" value="Chromosome 18"/>
</dbReference>
<dbReference type="Bgee" id="ENSBTAG00000013340">
    <property type="expression patterns" value="Expressed in ileocecal valve and 104 other cell types or tissues"/>
</dbReference>
<dbReference type="GO" id="GO:0097144">
    <property type="term" value="C:BAX complex"/>
    <property type="evidence" value="ECO:0000250"/>
    <property type="project" value="UniProtKB"/>
</dbReference>
<dbReference type="GO" id="GO:0097136">
    <property type="term" value="C:Bcl-2 family protein complex"/>
    <property type="evidence" value="ECO:0000250"/>
    <property type="project" value="UniProtKB"/>
</dbReference>
<dbReference type="GO" id="GO:0005737">
    <property type="term" value="C:cytoplasm"/>
    <property type="evidence" value="ECO:0000250"/>
    <property type="project" value="UniProtKB"/>
</dbReference>
<dbReference type="GO" id="GO:0005829">
    <property type="term" value="C:cytosol"/>
    <property type="evidence" value="ECO:0000250"/>
    <property type="project" value="UniProtKB"/>
</dbReference>
<dbReference type="GO" id="GO:0005783">
    <property type="term" value="C:endoplasmic reticulum"/>
    <property type="evidence" value="ECO:0000250"/>
    <property type="project" value="HGNC-UCL"/>
</dbReference>
<dbReference type="GO" id="GO:0005789">
    <property type="term" value="C:endoplasmic reticulum membrane"/>
    <property type="evidence" value="ECO:0000250"/>
    <property type="project" value="UniProtKB"/>
</dbReference>
<dbReference type="GO" id="GO:0005741">
    <property type="term" value="C:mitochondrial outer membrane"/>
    <property type="evidence" value="ECO:0000250"/>
    <property type="project" value="UniProtKB"/>
</dbReference>
<dbReference type="GO" id="GO:0005757">
    <property type="term" value="C:mitochondrial permeability transition pore complex"/>
    <property type="evidence" value="ECO:0000250"/>
    <property type="project" value="UniProtKB"/>
</dbReference>
<dbReference type="GO" id="GO:0005739">
    <property type="term" value="C:mitochondrion"/>
    <property type="evidence" value="ECO:0000250"/>
    <property type="project" value="UniProtKB"/>
</dbReference>
<dbReference type="GO" id="GO:0005634">
    <property type="term" value="C:nucleus"/>
    <property type="evidence" value="ECO:0000250"/>
    <property type="project" value="UniProtKB"/>
</dbReference>
<dbReference type="GO" id="GO:0046930">
    <property type="term" value="C:pore complex"/>
    <property type="evidence" value="ECO:0000250"/>
    <property type="project" value="UniProtKB"/>
</dbReference>
<dbReference type="GO" id="GO:0051434">
    <property type="term" value="F:BH3 domain binding"/>
    <property type="evidence" value="ECO:0000250"/>
    <property type="project" value="UniProtKB"/>
</dbReference>
<dbReference type="GO" id="GO:0015267">
    <property type="term" value="F:channel activity"/>
    <property type="evidence" value="ECO:0000250"/>
    <property type="project" value="UniProtKB"/>
</dbReference>
<dbReference type="GO" id="GO:0008289">
    <property type="term" value="F:lipid binding"/>
    <property type="evidence" value="ECO:0000250"/>
    <property type="project" value="UniProtKB"/>
</dbReference>
<dbReference type="GO" id="GO:0042803">
    <property type="term" value="F:protein homodimerization activity"/>
    <property type="evidence" value="ECO:0000250"/>
    <property type="project" value="HGNC"/>
</dbReference>
<dbReference type="GO" id="GO:0008637">
    <property type="term" value="P:apoptotic mitochondrial changes"/>
    <property type="evidence" value="ECO:0000250"/>
    <property type="project" value="UniProtKB"/>
</dbReference>
<dbReference type="GO" id="GO:0097190">
    <property type="term" value="P:apoptotic signaling pathway"/>
    <property type="evidence" value="ECO:0000250"/>
    <property type="project" value="UniProtKB"/>
</dbReference>
<dbReference type="GO" id="GO:0001783">
    <property type="term" value="P:B cell apoptotic process"/>
    <property type="evidence" value="ECO:0000250"/>
    <property type="project" value="UniProtKB"/>
</dbReference>
<dbReference type="GO" id="GO:0010248">
    <property type="term" value="P:establishment or maintenance of transmembrane electrochemical gradient"/>
    <property type="evidence" value="ECO:0000250"/>
    <property type="project" value="UniProtKB"/>
</dbReference>
<dbReference type="GO" id="GO:0097192">
    <property type="term" value="P:extrinsic apoptotic signaling pathway in absence of ligand"/>
    <property type="evidence" value="ECO:0000318"/>
    <property type="project" value="GO_Central"/>
</dbReference>
<dbReference type="GO" id="GO:0097193">
    <property type="term" value="P:intrinsic apoptotic signaling pathway"/>
    <property type="evidence" value="ECO:0000250"/>
    <property type="project" value="UniProtKB"/>
</dbReference>
<dbReference type="GO" id="GO:0008630">
    <property type="term" value="P:intrinsic apoptotic signaling pathway in response to DNA damage"/>
    <property type="evidence" value="ECO:0000250"/>
    <property type="project" value="UniProtKB"/>
</dbReference>
<dbReference type="GO" id="GO:0043653">
    <property type="term" value="P:mitochondrial fragmentation involved in apoptotic process"/>
    <property type="evidence" value="ECO:0000250"/>
    <property type="project" value="UniProtKB"/>
</dbReference>
<dbReference type="GO" id="GO:0008053">
    <property type="term" value="P:mitochondrial fusion"/>
    <property type="evidence" value="ECO:0000250"/>
    <property type="project" value="UniProtKB"/>
</dbReference>
<dbReference type="GO" id="GO:0010917">
    <property type="term" value="P:negative regulation of mitochondrial membrane potential"/>
    <property type="evidence" value="ECO:0000250"/>
    <property type="project" value="UniProtKB"/>
</dbReference>
<dbReference type="GO" id="GO:0032091">
    <property type="term" value="P:negative regulation of protein binding"/>
    <property type="evidence" value="ECO:0000250"/>
    <property type="project" value="UniProtKB"/>
</dbReference>
<dbReference type="GO" id="GO:0043065">
    <property type="term" value="P:positive regulation of apoptotic process"/>
    <property type="evidence" value="ECO:0000250"/>
    <property type="project" value="UniProtKB"/>
</dbReference>
<dbReference type="GO" id="GO:2001244">
    <property type="term" value="P:positive regulation of intrinsic apoptotic signaling pathway"/>
    <property type="evidence" value="ECO:0000250"/>
    <property type="project" value="UniProtKB"/>
</dbReference>
<dbReference type="GO" id="GO:0043525">
    <property type="term" value="P:positive regulation of neuron apoptotic process"/>
    <property type="evidence" value="ECO:0000250"/>
    <property type="project" value="UniProtKB"/>
</dbReference>
<dbReference type="GO" id="GO:0031334">
    <property type="term" value="P:positive regulation of protein-containing complex assembly"/>
    <property type="evidence" value="ECO:0000250"/>
    <property type="project" value="UniProtKB"/>
</dbReference>
<dbReference type="GO" id="GO:0090200">
    <property type="term" value="P:positive regulation of release of cytochrome c from mitochondria"/>
    <property type="evidence" value="ECO:0000250"/>
    <property type="project" value="UniProtKB"/>
</dbReference>
<dbReference type="GO" id="GO:0042981">
    <property type="term" value="P:regulation of apoptotic process"/>
    <property type="evidence" value="ECO:0000250"/>
    <property type="project" value="UniProtKB"/>
</dbReference>
<dbReference type="GO" id="GO:0051881">
    <property type="term" value="P:regulation of mitochondrial membrane potential"/>
    <property type="evidence" value="ECO:0000250"/>
    <property type="project" value="UniProtKB"/>
</dbReference>
<dbReference type="GO" id="GO:0001836">
    <property type="term" value="P:release of cytochrome c from mitochondria"/>
    <property type="evidence" value="ECO:0000250"/>
    <property type="project" value="UniProtKB"/>
</dbReference>
<dbReference type="GO" id="GO:0032976">
    <property type="term" value="P:release of matrix enzymes from mitochondria"/>
    <property type="evidence" value="ECO:0000250"/>
    <property type="project" value="UniProtKB"/>
</dbReference>
<dbReference type="GO" id="GO:0009636">
    <property type="term" value="P:response to toxic substance"/>
    <property type="evidence" value="ECO:0000250"/>
    <property type="project" value="UniProtKB"/>
</dbReference>
<dbReference type="CDD" id="cd06845">
    <property type="entry name" value="Bcl-2_like"/>
    <property type="match status" value="1"/>
</dbReference>
<dbReference type="FunFam" id="1.10.437.10:FF:000004">
    <property type="entry name" value="apoptosis regulator BAX isoform X2"/>
    <property type="match status" value="1"/>
</dbReference>
<dbReference type="Gene3D" id="1.10.437.10">
    <property type="entry name" value="Blc2-like"/>
    <property type="match status" value="1"/>
</dbReference>
<dbReference type="InterPro" id="IPR036834">
    <property type="entry name" value="Bcl-2-like_sf"/>
</dbReference>
<dbReference type="InterPro" id="IPR046371">
    <property type="entry name" value="Bcl-2_BH1-3"/>
</dbReference>
<dbReference type="InterPro" id="IPR026298">
    <property type="entry name" value="Bcl-2_fam"/>
</dbReference>
<dbReference type="InterPro" id="IPR002475">
    <property type="entry name" value="Bcl2-like"/>
</dbReference>
<dbReference type="InterPro" id="IPR020717">
    <property type="entry name" value="Bcl2_BH1_motif_CS"/>
</dbReference>
<dbReference type="InterPro" id="IPR020726">
    <property type="entry name" value="Bcl2_BH2_motif_CS"/>
</dbReference>
<dbReference type="InterPro" id="IPR020728">
    <property type="entry name" value="Bcl2_BH3_motif_CS"/>
</dbReference>
<dbReference type="PANTHER" id="PTHR11256:SF42">
    <property type="entry name" value="APOPTOSIS REGULATOR BAX"/>
    <property type="match status" value="1"/>
</dbReference>
<dbReference type="PANTHER" id="PTHR11256">
    <property type="entry name" value="BCL-2 RELATED"/>
    <property type="match status" value="1"/>
</dbReference>
<dbReference type="Pfam" id="PF00452">
    <property type="entry name" value="Bcl-2"/>
    <property type="match status" value="1"/>
</dbReference>
<dbReference type="PRINTS" id="PR01862">
    <property type="entry name" value="BCL2FAMILY"/>
</dbReference>
<dbReference type="SMART" id="SM00337">
    <property type="entry name" value="BCL"/>
    <property type="match status" value="1"/>
</dbReference>
<dbReference type="SUPFAM" id="SSF56854">
    <property type="entry name" value="Bcl-2 inhibitors of programmed cell death"/>
    <property type="match status" value="1"/>
</dbReference>
<dbReference type="PROSITE" id="PS50062">
    <property type="entry name" value="BCL2_FAMILY"/>
    <property type="match status" value="1"/>
</dbReference>
<dbReference type="PROSITE" id="PS01080">
    <property type="entry name" value="BH1"/>
    <property type="match status" value="1"/>
</dbReference>
<dbReference type="PROSITE" id="PS01258">
    <property type="entry name" value="BH2"/>
    <property type="match status" value="1"/>
</dbReference>
<dbReference type="PROSITE" id="PS01259">
    <property type="entry name" value="BH3"/>
    <property type="match status" value="1"/>
</dbReference>
<feature type="chain" id="PRO_0000143052" description="Apoptosis regulator BAX">
    <location>
        <begin position="1"/>
        <end position="192"/>
    </location>
</feature>
<feature type="transmembrane region" description="Helical" evidence="3">
    <location>
        <begin position="172"/>
        <end position="192"/>
    </location>
</feature>
<feature type="short sequence motif" description="BH3">
    <location>
        <begin position="59"/>
        <end position="73"/>
    </location>
</feature>
<feature type="short sequence motif" description="BH1">
    <location>
        <begin position="98"/>
        <end position="118"/>
    </location>
</feature>
<feature type="short sequence motif" description="BH2">
    <location>
        <begin position="150"/>
        <end position="165"/>
    </location>
</feature>
<feature type="modified residue" description="N-acetylmethionine" evidence="2">
    <location>
        <position position="1"/>
    </location>
</feature>
<feature type="cross-link" description="Glycyl lysine isopeptide (Lys-Gly) (interchain with G-Cter in ubiquitin)" evidence="2">
    <location>
        <position position="128"/>
    </location>
</feature>
<feature type="cross-link" description="Glycyl lysine isopeptide (Lys-Gly) (interchain with G-Cter in ubiquitin)" evidence="2">
    <location>
        <position position="190"/>
    </location>
</feature>
<comment type="function">
    <text evidence="2">Plays a role in the mitochondrial apoptotic process. Under normal conditions, BAX is largely cytosolic via constant retrotranslocation from mitochondria to the cytosol mediated by BCL2L1/Bcl-xL, which avoids accumulation of toxic BAX levels at the mitochondrial outer membrane (MOM). Under stress conditions, undergoes a conformation change that causes translocation to the mitochondrion membrane, leading to the release of cytochrome c that then triggers apoptosis. Promotes activation of CASP3, and thereby apoptosis.</text>
</comment>
<comment type="subunit">
    <text evidence="2">Homodimer. Forms higher oligomers under stress conditions. Forms heterooligomers with BAK. Interacts with BCL2L11. Interaction with BCL2L11 promotes BAX oligomerization and association with mitochondrial membranes, with subsequent release of cytochrome c. Forms heterodimers with BCL2, BCL2L1 isoform Bcl-X(L), BCL2L2, MCL1 and A1. Interacts with SH3GLB1. Interacts with SFN and YWHAZ; the interaction occurs in the cytoplasm. Under stress conditions, JNK-mediated phosphorylation of SFN and YWHAZ, releases BAX to mitochondria. Interacts with RNF144B, which regulates the ubiquitin-dependent stability of BAX. Interacts with CLU under stress conditions that cause a conformation change leading to BAX oligomerization and association with mitochondria. Does not interact with CLU in unstressed cells. Interacts with FAIM2/LFG2. Interacts with RTL10/BOP. Interacts (via a C-terminal 33 residues) with NOL3 (via CARD domain); inhibits BAX activation and translocation and consequently cytochrome c release from mitochondria. Interacts with GIMAP3/IAN4 and GIMAP5/IAN5; this interaction is increased, when cells initiate apoptosis upon IL2 withdrawal. Interacts with IRF3; the interaction is direct, increases upon Sendai virus infection and mediates the formation of the apoptosis complex TOMM70:HSP90AA1:IRF3:BAX. Interacts with MOAP1, facilitating BAX-dependent mitochondrial outer membrane permeabilization and apoptosis. Interacts with BCL2L10/BCL-B (By similarity). Interacts with non-acetylated XRCC6/Ku70; this interaction leads to BAX sequestration in the cytosol, away from the mitochondria, preventing BAX-mediated apoptosis (By similarity).</text>
</comment>
<comment type="subcellular location">
    <molecule>Isoform Alpha</molecule>
    <subcellularLocation>
        <location evidence="2">Mitochondrion outer membrane</location>
        <topology evidence="3">Single-pass membrane protein</topology>
    </subcellularLocation>
    <subcellularLocation>
        <location evidence="2">Cytoplasm</location>
    </subcellularLocation>
    <subcellularLocation>
        <location evidence="2">Nucleus</location>
    </subcellularLocation>
    <text evidence="2">Colocalizes with 14-3-3 proteins in the cytoplasm. Under stress conditions, undergoes a conformation change that causes release from JNK-phosphorylated 14-3-3 proteins and translocation to the mitochondrion membrane (By similarity).</text>
</comment>
<comment type="subcellular location">
    <molecule>Isoform Beta</molecule>
    <subcellularLocation>
        <location evidence="1">Cytoplasm</location>
    </subcellularLocation>
</comment>
<comment type="subcellular location">
    <molecule>Isoform Gamma</molecule>
    <subcellularLocation>
        <location evidence="1">Cytoplasm</location>
    </subcellularLocation>
</comment>
<comment type="alternative products">
    <event type="alternative splicing"/>
    <isoform>
        <id>O02703-1</id>
        <name>Alpha</name>
        <sequence type="displayed"/>
    </isoform>
    <isoform>
        <id>O02703-2</id>
        <name>Beta</name>
        <sequence type="not described"/>
    </isoform>
    <isoform>
        <id>O02703-3</id>
        <name>Gamma</name>
        <sequence type="not described"/>
    </isoform>
</comment>
<comment type="domain">
    <text evidence="2">Intact BH3 motif is required by BIK, BID, BAK, BAD and BAX for their pro-apoptotic activity and for their interaction with anti-apoptotic members of the Bcl-2 family.</text>
</comment>
<comment type="PTM">
    <text evidence="2">Ubiquitinated in the absence of XRCC6/Ku70 (By similarity). Ubiquitinated on Lys-128 and Lys-190. 'Lys-63'-linked polyubiquitin chains on Lys-128 are removed by USP12.</text>
</comment>
<comment type="miscellaneous">
    <molecule>Isoform Alpha</molecule>
    <text>21 kDa protein.</text>
</comment>
<comment type="similarity">
    <text evidence="4">Belongs to the Bcl-2 family.</text>
</comment>
<gene>
    <name type="primary">BAX</name>
</gene>
<sequence>MDGSGEQPRGGGPTSSEQIMKTGALLLQGFIQDRAGRMGGETPELGLEQVPQDASTKKLSECLKRIGDELDSNMELQRMIAAVDTDSPREVFFRVAAEMFSDGNFNWGRVVALFYFASKLVLKALCTKVPELIRTIMGWTLDFLRERLLGWIQDQGGWDGLLSYFGTPTWQTVTIFVAGVLTASLTIWKKMG</sequence>
<accession>O02703</accession>
<reference key="1">
    <citation type="journal article" date="1998" name="Virology">
        <title>Increased ratio of bcl-2/bax expression is associated with bovine leukemia virus-induced leukemogenesis in cattle.</title>
        <authorList>
            <person name="Reyes R.A."/>
            <person name="Cockerell G.L."/>
        </authorList>
    </citation>
    <scope>NUCLEOTIDE SEQUENCE [MRNA]</scope>
    <source>
        <strain>Holstein</strain>
        <tissue>Thymus</tissue>
    </source>
</reference>
<evidence type="ECO:0000250" key="1"/>
<evidence type="ECO:0000250" key="2">
    <source>
        <dbReference type="UniProtKB" id="Q07812"/>
    </source>
</evidence>
<evidence type="ECO:0000255" key="3"/>
<evidence type="ECO:0000305" key="4"/>
<keyword id="KW-0007">Acetylation</keyword>
<keyword id="KW-0025">Alternative splicing</keyword>
<keyword id="KW-0053">Apoptosis</keyword>
<keyword id="KW-0963">Cytoplasm</keyword>
<keyword id="KW-1017">Isopeptide bond</keyword>
<keyword id="KW-0472">Membrane</keyword>
<keyword id="KW-0496">Mitochondrion</keyword>
<keyword id="KW-1000">Mitochondrion outer membrane</keyword>
<keyword id="KW-0539">Nucleus</keyword>
<keyword id="KW-1185">Reference proteome</keyword>
<keyword id="KW-0812">Transmembrane</keyword>
<keyword id="KW-1133">Transmembrane helix</keyword>
<keyword id="KW-0832">Ubl conjugation</keyword>
<name>BAX_BOVIN</name>
<protein>
    <recommendedName>
        <fullName>Apoptosis regulator BAX</fullName>
    </recommendedName>
</protein>
<organism>
    <name type="scientific">Bos taurus</name>
    <name type="common">Bovine</name>
    <dbReference type="NCBI Taxonomy" id="9913"/>
    <lineage>
        <taxon>Eukaryota</taxon>
        <taxon>Metazoa</taxon>
        <taxon>Chordata</taxon>
        <taxon>Craniata</taxon>
        <taxon>Vertebrata</taxon>
        <taxon>Euteleostomi</taxon>
        <taxon>Mammalia</taxon>
        <taxon>Eutheria</taxon>
        <taxon>Laurasiatheria</taxon>
        <taxon>Artiodactyla</taxon>
        <taxon>Ruminantia</taxon>
        <taxon>Pecora</taxon>
        <taxon>Bovidae</taxon>
        <taxon>Bovinae</taxon>
        <taxon>Bos</taxon>
    </lineage>
</organism>
<proteinExistence type="evidence at transcript level"/>